<feature type="chain" id="PRO_0000154655" description="Large ribosomal subunit protein uL10">
    <location>
        <begin position="1"/>
        <end position="172"/>
    </location>
</feature>
<name>RL10_LIBAF</name>
<keyword id="KW-0687">Ribonucleoprotein</keyword>
<keyword id="KW-0689">Ribosomal protein</keyword>
<keyword id="KW-0694">RNA-binding</keyword>
<keyword id="KW-0699">rRNA-binding</keyword>
<dbReference type="EMBL" id="U09675">
    <property type="protein sequence ID" value="AAA19555.1"/>
    <property type="molecule type" value="Genomic_DNA"/>
</dbReference>
<dbReference type="RefSeq" id="WP_047264428.1">
    <property type="nucleotide sequence ID" value="NZ_CP146613.1"/>
</dbReference>
<dbReference type="SMR" id="P41191"/>
<dbReference type="GO" id="GO:0015934">
    <property type="term" value="C:large ribosomal subunit"/>
    <property type="evidence" value="ECO:0007669"/>
    <property type="project" value="InterPro"/>
</dbReference>
<dbReference type="GO" id="GO:0070180">
    <property type="term" value="F:large ribosomal subunit rRNA binding"/>
    <property type="evidence" value="ECO:0007669"/>
    <property type="project" value="UniProtKB-UniRule"/>
</dbReference>
<dbReference type="GO" id="GO:0003735">
    <property type="term" value="F:structural constituent of ribosome"/>
    <property type="evidence" value="ECO:0007669"/>
    <property type="project" value="InterPro"/>
</dbReference>
<dbReference type="GO" id="GO:0006412">
    <property type="term" value="P:translation"/>
    <property type="evidence" value="ECO:0007669"/>
    <property type="project" value="UniProtKB-UniRule"/>
</dbReference>
<dbReference type="CDD" id="cd05797">
    <property type="entry name" value="Ribosomal_L10"/>
    <property type="match status" value="1"/>
</dbReference>
<dbReference type="Gene3D" id="3.30.70.1730">
    <property type="match status" value="1"/>
</dbReference>
<dbReference type="HAMAP" id="MF_00362">
    <property type="entry name" value="Ribosomal_uL10"/>
    <property type="match status" value="1"/>
</dbReference>
<dbReference type="InterPro" id="IPR001790">
    <property type="entry name" value="Ribosomal_uL10"/>
</dbReference>
<dbReference type="InterPro" id="IPR043141">
    <property type="entry name" value="Ribosomal_uL10-like_sf"/>
</dbReference>
<dbReference type="InterPro" id="IPR022973">
    <property type="entry name" value="Ribosomal_uL10_bac"/>
</dbReference>
<dbReference type="InterPro" id="IPR047865">
    <property type="entry name" value="Ribosomal_uL10_bac_type"/>
</dbReference>
<dbReference type="InterPro" id="IPR002363">
    <property type="entry name" value="Ribosomal_uL10_CS_bac"/>
</dbReference>
<dbReference type="NCBIfam" id="NF000955">
    <property type="entry name" value="PRK00099.1-1"/>
    <property type="match status" value="1"/>
</dbReference>
<dbReference type="PANTHER" id="PTHR11560">
    <property type="entry name" value="39S RIBOSOMAL PROTEIN L10, MITOCHONDRIAL"/>
    <property type="match status" value="1"/>
</dbReference>
<dbReference type="Pfam" id="PF00466">
    <property type="entry name" value="Ribosomal_L10"/>
    <property type="match status" value="1"/>
</dbReference>
<dbReference type="SUPFAM" id="SSF160369">
    <property type="entry name" value="Ribosomal protein L10-like"/>
    <property type="match status" value="1"/>
</dbReference>
<dbReference type="PROSITE" id="PS01109">
    <property type="entry name" value="RIBOSOMAL_L10"/>
    <property type="match status" value="1"/>
</dbReference>
<gene>
    <name type="primary">rplJ</name>
</gene>
<accession>P41191</accession>
<organism>
    <name type="scientific">Liberibacter africanus</name>
    <name type="common">Citrus greening disease</name>
    <name type="synonym">Liberobacter africanum</name>
    <dbReference type="NCBI Taxonomy" id="34020"/>
    <lineage>
        <taxon>Bacteria</taxon>
        <taxon>Pseudomonadati</taxon>
        <taxon>Pseudomonadota</taxon>
        <taxon>Alphaproteobacteria</taxon>
        <taxon>Hyphomicrobiales</taxon>
        <taxon>Rhizobiaceae</taxon>
        <taxon>Liberibacter</taxon>
    </lineage>
</organism>
<proteinExistence type="inferred from homology"/>
<protein>
    <recommendedName>
        <fullName evidence="2">Large ribosomal subunit protein uL10</fullName>
    </recommendedName>
    <alternativeName>
        <fullName>50S ribosomal protein L10</fullName>
    </alternativeName>
</protein>
<comment type="function">
    <text evidence="1">Forms part of the ribosomal stalk, playing a central role in the interaction of the ribosome with GTP-bound translation factors.</text>
</comment>
<comment type="subunit">
    <text evidence="1">Part of the ribosomal stalk of the 50S ribosomal subunit. The N-terminus interacts with L11 and the large rRNA to form the base of the stalk. The C-terminus forms an elongated spine to which L12 dimers bind in a sequential fashion forming a multimeric L10(L12)X complex (By similarity).</text>
</comment>
<comment type="similarity">
    <text evidence="2">Belongs to the universal ribosomal protein uL10 family.</text>
</comment>
<sequence>MNRQEKSVEISELSKIFSSSGSVVVAHYKGISVAQIKDLRKKVREAGGGVKVAKNRLVKIAVSDTSLKGVSDLFVGQSLIVYSVDPIVAPKISVSFANDNKQFVVLGGILEKDILDQDSIKRIASLPNIDGIRSMIISAIQFNSTRLVNLLNAPQTKIVRAISAFVDKNQQS</sequence>
<evidence type="ECO:0000250" key="1"/>
<evidence type="ECO:0000305" key="2"/>
<reference key="1">
    <citation type="journal article" date="1995" name="Curr. Microbiol.">
        <title>Detection and characterization of the African citrus greening Liberobacter by amplification, cloning, and sequencing of the rplKAJL-rpoBC operon.</title>
        <authorList>
            <person name="Planet P."/>
            <person name="Jagoueix S."/>
            <person name="Bove J.M."/>
            <person name="Garnier M."/>
        </authorList>
    </citation>
    <scope>NUCLEOTIDE SEQUENCE [GENOMIC DNA]</scope>
    <source>
        <strain>Nelspruit</strain>
    </source>
</reference>